<keyword id="KW-0963">Cytoplasm</keyword>
<keyword id="KW-0342">GTP-binding</keyword>
<keyword id="KW-0396">Initiation factor</keyword>
<keyword id="KW-0547">Nucleotide-binding</keyword>
<keyword id="KW-0648">Protein biosynthesis</keyword>
<protein>
    <recommendedName>
        <fullName evidence="2">Translation initiation factor IF-2</fullName>
    </recommendedName>
</protein>
<proteinExistence type="inferred from homology"/>
<feature type="chain" id="PRO_1000118758" description="Translation initiation factor IF-2">
    <location>
        <begin position="1"/>
        <end position="1005"/>
    </location>
</feature>
<feature type="domain" description="tr-type G">
    <location>
        <begin position="495"/>
        <end position="668"/>
    </location>
</feature>
<feature type="region of interest" description="Disordered" evidence="3">
    <location>
        <begin position="54"/>
        <end position="337"/>
    </location>
</feature>
<feature type="region of interest" description="Disordered" evidence="3">
    <location>
        <begin position="368"/>
        <end position="414"/>
    </location>
</feature>
<feature type="region of interest" description="G1" evidence="1">
    <location>
        <begin position="504"/>
        <end position="511"/>
    </location>
</feature>
<feature type="region of interest" description="G2" evidence="1">
    <location>
        <begin position="529"/>
        <end position="533"/>
    </location>
</feature>
<feature type="region of interest" description="G3" evidence="1">
    <location>
        <begin position="554"/>
        <end position="557"/>
    </location>
</feature>
<feature type="region of interest" description="G4" evidence="1">
    <location>
        <begin position="608"/>
        <end position="611"/>
    </location>
</feature>
<feature type="region of interest" description="G5" evidence="1">
    <location>
        <begin position="644"/>
        <end position="646"/>
    </location>
</feature>
<feature type="compositionally biased region" description="Polar residues" evidence="3">
    <location>
        <begin position="58"/>
        <end position="73"/>
    </location>
</feature>
<feature type="compositionally biased region" description="Pro residues" evidence="3">
    <location>
        <begin position="75"/>
        <end position="86"/>
    </location>
</feature>
<feature type="compositionally biased region" description="Polar residues" evidence="3">
    <location>
        <begin position="146"/>
        <end position="157"/>
    </location>
</feature>
<feature type="compositionally biased region" description="Low complexity" evidence="3">
    <location>
        <begin position="189"/>
        <end position="198"/>
    </location>
</feature>
<feature type="compositionally biased region" description="Low complexity" evidence="3">
    <location>
        <begin position="222"/>
        <end position="240"/>
    </location>
</feature>
<feature type="compositionally biased region" description="Basic and acidic residues" evidence="3">
    <location>
        <begin position="258"/>
        <end position="274"/>
    </location>
</feature>
<feature type="compositionally biased region" description="Basic residues" evidence="3">
    <location>
        <begin position="392"/>
        <end position="401"/>
    </location>
</feature>
<feature type="binding site" evidence="2">
    <location>
        <begin position="504"/>
        <end position="511"/>
    </location>
    <ligand>
        <name>GTP</name>
        <dbReference type="ChEBI" id="CHEBI:37565"/>
    </ligand>
</feature>
<feature type="binding site" evidence="2">
    <location>
        <begin position="554"/>
        <end position="558"/>
    </location>
    <ligand>
        <name>GTP</name>
        <dbReference type="ChEBI" id="CHEBI:37565"/>
    </ligand>
</feature>
<feature type="binding site" evidence="2">
    <location>
        <begin position="608"/>
        <end position="611"/>
    </location>
    <ligand>
        <name>GTP</name>
        <dbReference type="ChEBI" id="CHEBI:37565"/>
    </ligand>
</feature>
<gene>
    <name evidence="2" type="primary">infB</name>
    <name type="ordered locus">Cyan7425_2091</name>
</gene>
<comment type="function">
    <text evidence="2">One of the essential components for the initiation of protein synthesis. Protects formylmethionyl-tRNA from spontaneous hydrolysis and promotes its binding to the 30S ribosomal subunits. Also involved in the hydrolysis of GTP during the formation of the 70S ribosomal complex.</text>
</comment>
<comment type="subcellular location">
    <subcellularLocation>
        <location evidence="2">Cytoplasm</location>
    </subcellularLocation>
</comment>
<comment type="similarity">
    <text evidence="2">Belongs to the TRAFAC class translation factor GTPase superfamily. Classic translation factor GTPase family. IF-2 subfamily.</text>
</comment>
<reference key="1">
    <citation type="journal article" date="2011" name="MBio">
        <title>Novel metabolic attributes of the genus Cyanothece, comprising a group of unicellular nitrogen-fixing Cyanobacteria.</title>
        <authorList>
            <person name="Bandyopadhyay A."/>
            <person name="Elvitigala T."/>
            <person name="Welsh E."/>
            <person name="Stockel J."/>
            <person name="Liberton M."/>
            <person name="Min H."/>
            <person name="Sherman L.A."/>
            <person name="Pakrasi H.B."/>
        </authorList>
    </citation>
    <scope>NUCLEOTIDE SEQUENCE [LARGE SCALE GENOMIC DNA]</scope>
    <source>
        <strain>PCC 7425 / ATCC 29141</strain>
    </source>
</reference>
<name>IF2_CYAP4</name>
<dbReference type="EMBL" id="CP001344">
    <property type="protein sequence ID" value="ACL44454.1"/>
    <property type="molecule type" value="Genomic_DNA"/>
</dbReference>
<dbReference type="SMR" id="B8HUA9"/>
<dbReference type="STRING" id="395961.Cyan7425_2091"/>
<dbReference type="KEGG" id="cyn:Cyan7425_2091"/>
<dbReference type="eggNOG" id="COG0532">
    <property type="taxonomic scope" value="Bacteria"/>
</dbReference>
<dbReference type="HOGENOM" id="CLU_006301_5_1_3"/>
<dbReference type="OrthoDB" id="9811804at2"/>
<dbReference type="GO" id="GO:0005829">
    <property type="term" value="C:cytosol"/>
    <property type="evidence" value="ECO:0007669"/>
    <property type="project" value="TreeGrafter"/>
</dbReference>
<dbReference type="GO" id="GO:0005525">
    <property type="term" value="F:GTP binding"/>
    <property type="evidence" value="ECO:0007669"/>
    <property type="project" value="UniProtKB-KW"/>
</dbReference>
<dbReference type="GO" id="GO:0003924">
    <property type="term" value="F:GTPase activity"/>
    <property type="evidence" value="ECO:0007669"/>
    <property type="project" value="UniProtKB-UniRule"/>
</dbReference>
<dbReference type="GO" id="GO:0003743">
    <property type="term" value="F:translation initiation factor activity"/>
    <property type="evidence" value="ECO:0007669"/>
    <property type="project" value="UniProtKB-UniRule"/>
</dbReference>
<dbReference type="CDD" id="cd01887">
    <property type="entry name" value="IF2_eIF5B"/>
    <property type="match status" value="1"/>
</dbReference>
<dbReference type="CDD" id="cd03702">
    <property type="entry name" value="IF2_mtIF2_II"/>
    <property type="match status" value="1"/>
</dbReference>
<dbReference type="CDD" id="cd03692">
    <property type="entry name" value="mtIF2_IVc"/>
    <property type="match status" value="1"/>
</dbReference>
<dbReference type="FunFam" id="2.40.30.10:FF:000007">
    <property type="entry name" value="Translation initiation factor IF-2"/>
    <property type="match status" value="1"/>
</dbReference>
<dbReference type="FunFam" id="2.40.30.10:FF:000008">
    <property type="entry name" value="Translation initiation factor IF-2"/>
    <property type="match status" value="1"/>
</dbReference>
<dbReference type="FunFam" id="3.40.50.10050:FF:000001">
    <property type="entry name" value="Translation initiation factor IF-2"/>
    <property type="match status" value="1"/>
</dbReference>
<dbReference type="FunFam" id="3.40.50.300:FF:000019">
    <property type="entry name" value="Translation initiation factor IF-2"/>
    <property type="match status" value="1"/>
</dbReference>
<dbReference type="Gene3D" id="1.10.10.2480">
    <property type="match status" value="1"/>
</dbReference>
<dbReference type="Gene3D" id="3.40.50.300">
    <property type="entry name" value="P-loop containing nucleotide triphosphate hydrolases"/>
    <property type="match status" value="1"/>
</dbReference>
<dbReference type="Gene3D" id="2.40.30.10">
    <property type="entry name" value="Translation factors"/>
    <property type="match status" value="2"/>
</dbReference>
<dbReference type="Gene3D" id="3.40.50.10050">
    <property type="entry name" value="Translation initiation factor IF- 2, domain 3"/>
    <property type="match status" value="1"/>
</dbReference>
<dbReference type="HAMAP" id="MF_00100_B">
    <property type="entry name" value="IF_2_B"/>
    <property type="match status" value="1"/>
</dbReference>
<dbReference type="InterPro" id="IPR053905">
    <property type="entry name" value="EF-G-like_DII"/>
</dbReference>
<dbReference type="InterPro" id="IPR044145">
    <property type="entry name" value="IF2_II"/>
</dbReference>
<dbReference type="InterPro" id="IPR006847">
    <property type="entry name" value="IF2_N"/>
</dbReference>
<dbReference type="InterPro" id="IPR027417">
    <property type="entry name" value="P-loop_NTPase"/>
</dbReference>
<dbReference type="InterPro" id="IPR005225">
    <property type="entry name" value="Small_GTP-bd"/>
</dbReference>
<dbReference type="InterPro" id="IPR000795">
    <property type="entry name" value="T_Tr_GTP-bd_dom"/>
</dbReference>
<dbReference type="InterPro" id="IPR000178">
    <property type="entry name" value="TF_IF2_bacterial-like"/>
</dbReference>
<dbReference type="InterPro" id="IPR015760">
    <property type="entry name" value="TIF_IF2"/>
</dbReference>
<dbReference type="InterPro" id="IPR023115">
    <property type="entry name" value="TIF_IF2_dom3"/>
</dbReference>
<dbReference type="InterPro" id="IPR036925">
    <property type="entry name" value="TIF_IF2_dom3_sf"/>
</dbReference>
<dbReference type="InterPro" id="IPR009000">
    <property type="entry name" value="Transl_B-barrel_sf"/>
</dbReference>
<dbReference type="NCBIfam" id="TIGR00487">
    <property type="entry name" value="IF-2"/>
    <property type="match status" value="1"/>
</dbReference>
<dbReference type="NCBIfam" id="TIGR00231">
    <property type="entry name" value="small_GTP"/>
    <property type="match status" value="1"/>
</dbReference>
<dbReference type="PANTHER" id="PTHR43381:SF5">
    <property type="entry name" value="TR-TYPE G DOMAIN-CONTAINING PROTEIN"/>
    <property type="match status" value="1"/>
</dbReference>
<dbReference type="PANTHER" id="PTHR43381">
    <property type="entry name" value="TRANSLATION INITIATION FACTOR IF-2-RELATED"/>
    <property type="match status" value="1"/>
</dbReference>
<dbReference type="Pfam" id="PF22042">
    <property type="entry name" value="EF-G_D2"/>
    <property type="match status" value="1"/>
</dbReference>
<dbReference type="Pfam" id="PF00009">
    <property type="entry name" value="GTP_EFTU"/>
    <property type="match status" value="1"/>
</dbReference>
<dbReference type="Pfam" id="PF11987">
    <property type="entry name" value="IF-2"/>
    <property type="match status" value="1"/>
</dbReference>
<dbReference type="Pfam" id="PF04760">
    <property type="entry name" value="IF2_N"/>
    <property type="match status" value="2"/>
</dbReference>
<dbReference type="PRINTS" id="PR00315">
    <property type="entry name" value="ELONGATNFCT"/>
</dbReference>
<dbReference type="SUPFAM" id="SSF52156">
    <property type="entry name" value="Initiation factor IF2/eIF5b, domain 3"/>
    <property type="match status" value="1"/>
</dbReference>
<dbReference type="SUPFAM" id="SSF52540">
    <property type="entry name" value="P-loop containing nucleoside triphosphate hydrolases"/>
    <property type="match status" value="1"/>
</dbReference>
<dbReference type="SUPFAM" id="SSF50447">
    <property type="entry name" value="Translation proteins"/>
    <property type="match status" value="2"/>
</dbReference>
<dbReference type="PROSITE" id="PS51722">
    <property type="entry name" value="G_TR_2"/>
    <property type="match status" value="1"/>
</dbReference>
<dbReference type="PROSITE" id="PS01176">
    <property type="entry name" value="IF2"/>
    <property type="match status" value="1"/>
</dbReference>
<sequence length="1005" mass="108397">MSNNKVRIYDLSRDLNLDNRDVLIICEQLNIPVKSHSSTISESEADRIRAAAEKYVPSPSTHSMPPTRPTSHSRPLPPQPGKPQPKVPQTKVPQILELRRHQTPAEPATGSAGSSVAPVSRSPVEPQAGLPKTASPQRPVRPAAPGSNSPSHSESTPVTPPAISKPAVSSSPARTEPLRPAVPPPKAAPSPAAMAGRAEPSQPGPQKPVLKRPKVESPQAEVESAPVATATPAPASPRAELTPPPRRELPQLKAPPRPRSETSEDGARRGEKLVARAPEPPGTETDAIEVLQNVSLPKLAGRGAKRPKTKAEEEDELQEELAAKTPKTATKLKRRPQLKLEDEDDVDFAAEVNVQAVVDVSQSLVRPPKPKAAKSAKPAAVATTRISAPKTGGRKLSRRDRRQQEETQERPTSVVLSGDLTVQELANRLALPTSEIIKTLFFKGIAATINQMLDLETASMVAREMGMEVETPEVESTARKVTEMLEAQDLENLQRRPPVVTIMGHVDHGKTTLLDAIRQTKVAQGEAGGITQHIGAYHVDVEHEDQVQQVVFLDTPGHEAFTAMRARGARVTDIAILVVAADDGVRPQTVEAISHAQAAEVPIVVAINKIDKPTAQPDRVKQELTEYNLVPEEWGGDTIMVPVSAINRENLDTLLEMILLVSEVEDLYANPDRSARGTVIEAHLDKARGPVATLLVQNGTLRVGDILLAGSALGKVRAMIDDRGQRVEAATPSFAVEVLGLGDVPAAGDEFEVFNDEREARAIANERANQQRLSRLQQALSSRRVSLTSLSDQAREGELKELNLILKADVQGSVEAILNALGQIPQNEVQLRVLYAAPGEVTETDVDLAAASNAVVIGFNTTLASGSRASADQTGVDIREYNIIYKLLDDIEGAMEGLLEPELVEEPLGQAQVRAVFPVGKGFVAGCYVQSGKLIRNCKIRVLRSGNLVHSGTLNSLKRIKEDAREVNAGYECGIRLDDFQGWAEGDQIEAYQMVTKRRTLNPNA</sequence>
<evidence type="ECO:0000250" key="1"/>
<evidence type="ECO:0000255" key="2">
    <source>
        <dbReference type="HAMAP-Rule" id="MF_00100"/>
    </source>
</evidence>
<evidence type="ECO:0000256" key="3">
    <source>
        <dbReference type="SAM" id="MobiDB-lite"/>
    </source>
</evidence>
<accession>B8HUA9</accession>
<organism>
    <name type="scientific">Cyanothece sp. (strain PCC 7425 / ATCC 29141)</name>
    <dbReference type="NCBI Taxonomy" id="395961"/>
    <lineage>
        <taxon>Bacteria</taxon>
        <taxon>Bacillati</taxon>
        <taxon>Cyanobacteriota</taxon>
        <taxon>Cyanophyceae</taxon>
        <taxon>Gomontiellales</taxon>
        <taxon>Cyanothecaceae</taxon>
        <taxon>Cyanothece</taxon>
    </lineage>
</organism>